<dbReference type="EC" id="4.2.1.9" evidence="1"/>
<dbReference type="EMBL" id="CP001071">
    <property type="protein sequence ID" value="ACD04937.1"/>
    <property type="molecule type" value="Genomic_DNA"/>
</dbReference>
<dbReference type="RefSeq" id="WP_012420152.1">
    <property type="nucleotide sequence ID" value="NC_010655.1"/>
</dbReference>
<dbReference type="SMR" id="B2UR52"/>
<dbReference type="STRING" id="349741.Amuc_1111"/>
<dbReference type="PaxDb" id="349741-Amuc_1111"/>
<dbReference type="KEGG" id="amu:Amuc_1111"/>
<dbReference type="eggNOG" id="COG0129">
    <property type="taxonomic scope" value="Bacteria"/>
</dbReference>
<dbReference type="HOGENOM" id="CLU_014271_4_2_0"/>
<dbReference type="OrthoDB" id="9807077at2"/>
<dbReference type="BioCyc" id="AMUC349741:G1GBX-1188-MONOMER"/>
<dbReference type="UniPathway" id="UPA00047">
    <property type="reaction ID" value="UER00057"/>
</dbReference>
<dbReference type="UniPathway" id="UPA00049">
    <property type="reaction ID" value="UER00061"/>
</dbReference>
<dbReference type="Proteomes" id="UP000001031">
    <property type="component" value="Chromosome"/>
</dbReference>
<dbReference type="GO" id="GO:0005829">
    <property type="term" value="C:cytosol"/>
    <property type="evidence" value="ECO:0007669"/>
    <property type="project" value="TreeGrafter"/>
</dbReference>
<dbReference type="GO" id="GO:0051537">
    <property type="term" value="F:2 iron, 2 sulfur cluster binding"/>
    <property type="evidence" value="ECO:0007669"/>
    <property type="project" value="UniProtKB-UniRule"/>
</dbReference>
<dbReference type="GO" id="GO:0004160">
    <property type="term" value="F:dihydroxy-acid dehydratase activity"/>
    <property type="evidence" value="ECO:0007669"/>
    <property type="project" value="UniProtKB-UniRule"/>
</dbReference>
<dbReference type="GO" id="GO:0000287">
    <property type="term" value="F:magnesium ion binding"/>
    <property type="evidence" value="ECO:0007669"/>
    <property type="project" value="UniProtKB-UniRule"/>
</dbReference>
<dbReference type="GO" id="GO:0009097">
    <property type="term" value="P:isoleucine biosynthetic process"/>
    <property type="evidence" value="ECO:0007669"/>
    <property type="project" value="UniProtKB-UniRule"/>
</dbReference>
<dbReference type="GO" id="GO:0009099">
    <property type="term" value="P:L-valine biosynthetic process"/>
    <property type="evidence" value="ECO:0007669"/>
    <property type="project" value="UniProtKB-UniRule"/>
</dbReference>
<dbReference type="FunFam" id="3.50.30.80:FF:000001">
    <property type="entry name" value="Dihydroxy-acid dehydratase"/>
    <property type="match status" value="1"/>
</dbReference>
<dbReference type="Gene3D" id="3.50.30.80">
    <property type="entry name" value="IlvD/EDD C-terminal domain-like"/>
    <property type="match status" value="1"/>
</dbReference>
<dbReference type="HAMAP" id="MF_00012">
    <property type="entry name" value="IlvD"/>
    <property type="match status" value="1"/>
</dbReference>
<dbReference type="InterPro" id="IPR042096">
    <property type="entry name" value="Dihydro-acid_dehy_C"/>
</dbReference>
<dbReference type="InterPro" id="IPR004404">
    <property type="entry name" value="DihydroxyA_deHydtase"/>
</dbReference>
<dbReference type="InterPro" id="IPR020558">
    <property type="entry name" value="DiOHA_6PGluconate_deHydtase_CS"/>
</dbReference>
<dbReference type="InterPro" id="IPR056740">
    <property type="entry name" value="ILV_EDD_C"/>
</dbReference>
<dbReference type="InterPro" id="IPR000581">
    <property type="entry name" value="ILV_EDD_N"/>
</dbReference>
<dbReference type="InterPro" id="IPR037237">
    <property type="entry name" value="IlvD/EDD_N"/>
</dbReference>
<dbReference type="NCBIfam" id="TIGR00110">
    <property type="entry name" value="ilvD"/>
    <property type="match status" value="1"/>
</dbReference>
<dbReference type="NCBIfam" id="NF002068">
    <property type="entry name" value="PRK00911.1"/>
    <property type="match status" value="1"/>
</dbReference>
<dbReference type="PANTHER" id="PTHR43661">
    <property type="entry name" value="D-XYLONATE DEHYDRATASE"/>
    <property type="match status" value="1"/>
</dbReference>
<dbReference type="PANTHER" id="PTHR43661:SF3">
    <property type="entry name" value="D-XYLONATE DEHYDRATASE YAGF-RELATED"/>
    <property type="match status" value="1"/>
</dbReference>
<dbReference type="Pfam" id="PF24877">
    <property type="entry name" value="ILV_EDD_C"/>
    <property type="match status" value="1"/>
</dbReference>
<dbReference type="Pfam" id="PF00920">
    <property type="entry name" value="ILVD_EDD_N"/>
    <property type="match status" value="1"/>
</dbReference>
<dbReference type="SUPFAM" id="SSF143975">
    <property type="entry name" value="IlvD/EDD N-terminal domain-like"/>
    <property type="match status" value="1"/>
</dbReference>
<dbReference type="SUPFAM" id="SSF52016">
    <property type="entry name" value="LeuD/IlvD-like"/>
    <property type="match status" value="1"/>
</dbReference>
<dbReference type="PROSITE" id="PS00886">
    <property type="entry name" value="ILVD_EDD_1"/>
    <property type="match status" value="1"/>
</dbReference>
<dbReference type="PROSITE" id="PS00887">
    <property type="entry name" value="ILVD_EDD_2"/>
    <property type="match status" value="1"/>
</dbReference>
<sequence>MRSDRVKAGFERAPHRSLMRATGMTDEDLSRPFIAICNSFNEVIPGHVHLNRVAALIKEEVRKAGGTPVEFNLPGVCDGIAMGHGGMKFSLASRELIADSVETMLSAHAFDAMICIPNCDKIVPGMIMGALRCNIPTIFCSGGPMAAGMAEDGTVLDLNSVFEAVARFKAGKINEEELHSLECRACPGAGSCSGMFTANSMNCLSEVIGLALPGNGSLLATSEERKEFWKQTARRAVEMAKADGPLPRDIVTRDAIDNAFTIDMAMGGSSNTVLHTLAIAREAGVEYDLQRINDISRRTPNICKVAPSSRFHMQDVLRAGGVSAIIHEIARIPGALHLDAMTVSGKTLGETVEGCGIADETVIHPLENAYSRDGGLAILFGNLAEEGAVVKKAGVHPNMMSFRGPAVIFESQEEACEGILAGKVKSGDVVVIRNEGPKGGPGMQEMLAPTSYIMGQGLGAEVALITDGRFSGATHGACIGHISPEAAEGGLIGLLRNGDIIEYSIPDRTLNVCLSEEEIARRRADWKPTYNRVSSSWLSRYRQLATNASKGAVLRRGE</sequence>
<accession>B2UR52</accession>
<keyword id="KW-0001">2Fe-2S</keyword>
<keyword id="KW-0028">Amino-acid biosynthesis</keyword>
<keyword id="KW-0100">Branched-chain amino acid biosynthesis</keyword>
<keyword id="KW-0408">Iron</keyword>
<keyword id="KW-0411">Iron-sulfur</keyword>
<keyword id="KW-0456">Lyase</keyword>
<keyword id="KW-0460">Magnesium</keyword>
<keyword id="KW-0479">Metal-binding</keyword>
<keyword id="KW-1185">Reference proteome</keyword>
<protein>
    <recommendedName>
        <fullName evidence="1">Dihydroxy-acid dehydratase</fullName>
        <shortName evidence="1">DAD</shortName>
        <ecNumber evidence="1">4.2.1.9</ecNumber>
    </recommendedName>
</protein>
<organism>
    <name type="scientific">Akkermansia muciniphila (strain ATCC BAA-835 / DSM 22959 / JCM 33894 / BCRC 81048 / CCUG 64013 / CIP 107961 / Muc)</name>
    <dbReference type="NCBI Taxonomy" id="349741"/>
    <lineage>
        <taxon>Bacteria</taxon>
        <taxon>Pseudomonadati</taxon>
        <taxon>Verrucomicrobiota</taxon>
        <taxon>Verrucomicrobiia</taxon>
        <taxon>Verrucomicrobiales</taxon>
        <taxon>Akkermansiaceae</taxon>
        <taxon>Akkermansia</taxon>
    </lineage>
</organism>
<gene>
    <name evidence="1" type="primary">ilvD</name>
    <name type="ordered locus">Amuc_1111</name>
</gene>
<reference key="1">
    <citation type="journal article" date="2011" name="PLoS ONE">
        <title>The genome of Akkermansia muciniphila, a dedicated intestinal mucin degrader, and its use in exploring intestinal metagenomes.</title>
        <authorList>
            <person name="van Passel M.W."/>
            <person name="Kant R."/>
            <person name="Zoetendal E.G."/>
            <person name="Plugge C.M."/>
            <person name="Derrien M."/>
            <person name="Malfatti S.A."/>
            <person name="Chain P.S."/>
            <person name="Woyke T."/>
            <person name="Palva A."/>
            <person name="de Vos W.M."/>
            <person name="Smidt H."/>
        </authorList>
    </citation>
    <scope>NUCLEOTIDE SEQUENCE [LARGE SCALE GENOMIC DNA]</scope>
    <source>
        <strain>ATCC BAA-835 / DSM 22959 / JCM 33894 / BCRC 81048 / CCUG 64013 / CIP 107961 / Muc</strain>
    </source>
</reference>
<name>ILVD_AKKM8</name>
<comment type="function">
    <text evidence="1">Functions in the biosynthesis of branched-chain amino acids. Catalyzes the dehydration of (2R,3R)-2,3-dihydroxy-3-methylpentanoate (2,3-dihydroxy-3-methylvalerate) into 2-oxo-3-methylpentanoate (2-oxo-3-methylvalerate) and of (2R)-2,3-dihydroxy-3-methylbutanoate (2,3-dihydroxyisovalerate) into 2-oxo-3-methylbutanoate (2-oxoisovalerate), the penultimate precursor to L-isoleucine and L-valine, respectively.</text>
</comment>
<comment type="catalytic activity">
    <reaction evidence="1">
        <text>(2R)-2,3-dihydroxy-3-methylbutanoate = 3-methyl-2-oxobutanoate + H2O</text>
        <dbReference type="Rhea" id="RHEA:24809"/>
        <dbReference type="ChEBI" id="CHEBI:11851"/>
        <dbReference type="ChEBI" id="CHEBI:15377"/>
        <dbReference type="ChEBI" id="CHEBI:49072"/>
        <dbReference type="EC" id="4.2.1.9"/>
    </reaction>
    <physiologicalReaction direction="left-to-right" evidence="1">
        <dbReference type="Rhea" id="RHEA:24810"/>
    </physiologicalReaction>
</comment>
<comment type="catalytic activity">
    <reaction evidence="1">
        <text>(2R,3R)-2,3-dihydroxy-3-methylpentanoate = (S)-3-methyl-2-oxopentanoate + H2O</text>
        <dbReference type="Rhea" id="RHEA:27694"/>
        <dbReference type="ChEBI" id="CHEBI:15377"/>
        <dbReference type="ChEBI" id="CHEBI:35146"/>
        <dbReference type="ChEBI" id="CHEBI:49258"/>
        <dbReference type="EC" id="4.2.1.9"/>
    </reaction>
    <physiologicalReaction direction="left-to-right" evidence="1">
        <dbReference type="Rhea" id="RHEA:27695"/>
    </physiologicalReaction>
</comment>
<comment type="cofactor">
    <cofactor evidence="1">
        <name>[2Fe-2S] cluster</name>
        <dbReference type="ChEBI" id="CHEBI:190135"/>
    </cofactor>
    <text evidence="1">Binds 1 [2Fe-2S] cluster per subunit. This cluster acts as a Lewis acid cofactor.</text>
</comment>
<comment type="cofactor">
    <cofactor evidence="1">
        <name>Mg(2+)</name>
        <dbReference type="ChEBI" id="CHEBI:18420"/>
    </cofactor>
</comment>
<comment type="pathway">
    <text evidence="1">Amino-acid biosynthesis; L-isoleucine biosynthesis; L-isoleucine from 2-oxobutanoate: step 3/4.</text>
</comment>
<comment type="pathway">
    <text evidence="1">Amino-acid biosynthesis; L-valine biosynthesis; L-valine from pyruvate: step 3/4.</text>
</comment>
<comment type="subunit">
    <text evidence="1">Homodimer.</text>
</comment>
<comment type="similarity">
    <text evidence="1">Belongs to the IlvD/Edd family.</text>
</comment>
<proteinExistence type="inferred from homology"/>
<feature type="chain" id="PRO_1000089365" description="Dihydroxy-acid dehydratase">
    <location>
        <begin position="1"/>
        <end position="558"/>
    </location>
</feature>
<feature type="active site" description="Proton acceptor" evidence="1">
    <location>
        <position position="471"/>
    </location>
</feature>
<feature type="binding site" evidence="1">
    <location>
        <position position="78"/>
    </location>
    <ligand>
        <name>Mg(2+)</name>
        <dbReference type="ChEBI" id="CHEBI:18420"/>
    </ligand>
</feature>
<feature type="binding site" evidence="1">
    <location>
        <position position="119"/>
    </location>
    <ligand>
        <name>[2Fe-2S] cluster</name>
        <dbReference type="ChEBI" id="CHEBI:190135"/>
    </ligand>
</feature>
<feature type="binding site" evidence="1">
    <location>
        <position position="120"/>
    </location>
    <ligand>
        <name>Mg(2+)</name>
        <dbReference type="ChEBI" id="CHEBI:18420"/>
    </ligand>
</feature>
<feature type="binding site" description="via carbamate group" evidence="1">
    <location>
        <position position="121"/>
    </location>
    <ligand>
        <name>Mg(2+)</name>
        <dbReference type="ChEBI" id="CHEBI:18420"/>
    </ligand>
</feature>
<feature type="binding site" evidence="1">
    <location>
        <position position="192"/>
    </location>
    <ligand>
        <name>[2Fe-2S] cluster</name>
        <dbReference type="ChEBI" id="CHEBI:190135"/>
    </ligand>
</feature>
<feature type="binding site" evidence="1">
    <location>
        <position position="445"/>
    </location>
    <ligand>
        <name>Mg(2+)</name>
        <dbReference type="ChEBI" id="CHEBI:18420"/>
    </ligand>
</feature>
<feature type="modified residue" description="N6-carboxylysine" evidence="1">
    <location>
        <position position="121"/>
    </location>
</feature>
<evidence type="ECO:0000255" key="1">
    <source>
        <dbReference type="HAMAP-Rule" id="MF_00012"/>
    </source>
</evidence>